<accession>A1AVG1</accession>
<proteinExistence type="inferred from homology"/>
<name>ACCA_RUTMC</name>
<reference key="1">
    <citation type="journal article" date="2007" name="Science">
        <title>The Calyptogena magnifica chemoautotrophic symbiont genome.</title>
        <authorList>
            <person name="Newton I.L.G."/>
            <person name="Woyke T."/>
            <person name="Auchtung T.A."/>
            <person name="Dilly G.F."/>
            <person name="Dutton R.J."/>
            <person name="Fisher M.C."/>
            <person name="Fontanez K.M."/>
            <person name="Lau E."/>
            <person name="Stewart F.J."/>
            <person name="Richardson P.M."/>
            <person name="Barry K.W."/>
            <person name="Saunders E."/>
            <person name="Detter J.C."/>
            <person name="Wu D."/>
            <person name="Eisen J.A."/>
            <person name="Cavanaugh C.M."/>
        </authorList>
    </citation>
    <scope>NUCLEOTIDE SEQUENCE [LARGE SCALE GENOMIC DNA]</scope>
</reference>
<dbReference type="EC" id="2.1.3.15" evidence="1"/>
<dbReference type="EMBL" id="CP000488">
    <property type="protein sequence ID" value="ABL01918.1"/>
    <property type="molecule type" value="Genomic_DNA"/>
</dbReference>
<dbReference type="RefSeq" id="WP_011737544.1">
    <property type="nucleotide sequence ID" value="NC_008610.1"/>
</dbReference>
<dbReference type="SMR" id="A1AVG1"/>
<dbReference type="STRING" id="413404.Rmag_0123"/>
<dbReference type="KEGG" id="rma:Rmag_0123"/>
<dbReference type="eggNOG" id="COG0825">
    <property type="taxonomic scope" value="Bacteria"/>
</dbReference>
<dbReference type="HOGENOM" id="CLU_015486_0_2_6"/>
<dbReference type="OrthoDB" id="9808023at2"/>
<dbReference type="UniPathway" id="UPA00655">
    <property type="reaction ID" value="UER00711"/>
</dbReference>
<dbReference type="Proteomes" id="UP000002587">
    <property type="component" value="Chromosome"/>
</dbReference>
<dbReference type="GO" id="GO:0009317">
    <property type="term" value="C:acetyl-CoA carboxylase complex"/>
    <property type="evidence" value="ECO:0007669"/>
    <property type="project" value="InterPro"/>
</dbReference>
<dbReference type="GO" id="GO:0003989">
    <property type="term" value="F:acetyl-CoA carboxylase activity"/>
    <property type="evidence" value="ECO:0007669"/>
    <property type="project" value="InterPro"/>
</dbReference>
<dbReference type="GO" id="GO:0005524">
    <property type="term" value="F:ATP binding"/>
    <property type="evidence" value="ECO:0007669"/>
    <property type="project" value="UniProtKB-KW"/>
</dbReference>
<dbReference type="GO" id="GO:0016743">
    <property type="term" value="F:carboxyl- or carbamoyltransferase activity"/>
    <property type="evidence" value="ECO:0007669"/>
    <property type="project" value="UniProtKB-UniRule"/>
</dbReference>
<dbReference type="GO" id="GO:0006633">
    <property type="term" value="P:fatty acid biosynthetic process"/>
    <property type="evidence" value="ECO:0007669"/>
    <property type="project" value="UniProtKB-KW"/>
</dbReference>
<dbReference type="GO" id="GO:2001295">
    <property type="term" value="P:malonyl-CoA biosynthetic process"/>
    <property type="evidence" value="ECO:0007669"/>
    <property type="project" value="UniProtKB-UniRule"/>
</dbReference>
<dbReference type="Gene3D" id="3.90.226.10">
    <property type="entry name" value="2-enoyl-CoA Hydratase, Chain A, domain 1"/>
    <property type="match status" value="1"/>
</dbReference>
<dbReference type="HAMAP" id="MF_00823">
    <property type="entry name" value="AcetylCoA_CT_alpha"/>
    <property type="match status" value="1"/>
</dbReference>
<dbReference type="InterPro" id="IPR001095">
    <property type="entry name" value="Acetyl_CoA_COase_a_su"/>
</dbReference>
<dbReference type="InterPro" id="IPR029045">
    <property type="entry name" value="ClpP/crotonase-like_dom_sf"/>
</dbReference>
<dbReference type="InterPro" id="IPR011763">
    <property type="entry name" value="COA_CT_C"/>
</dbReference>
<dbReference type="NCBIfam" id="TIGR00513">
    <property type="entry name" value="accA"/>
    <property type="match status" value="1"/>
</dbReference>
<dbReference type="NCBIfam" id="NF041504">
    <property type="entry name" value="AccA_sub"/>
    <property type="match status" value="1"/>
</dbReference>
<dbReference type="NCBIfam" id="NF004344">
    <property type="entry name" value="PRK05724.1"/>
    <property type="match status" value="1"/>
</dbReference>
<dbReference type="PANTHER" id="PTHR42853">
    <property type="entry name" value="ACETYL-COENZYME A CARBOXYLASE CARBOXYL TRANSFERASE SUBUNIT ALPHA"/>
    <property type="match status" value="1"/>
</dbReference>
<dbReference type="PANTHER" id="PTHR42853:SF3">
    <property type="entry name" value="ACETYL-COENZYME A CARBOXYLASE CARBOXYL TRANSFERASE SUBUNIT ALPHA, CHLOROPLASTIC"/>
    <property type="match status" value="1"/>
</dbReference>
<dbReference type="Pfam" id="PF03255">
    <property type="entry name" value="ACCA"/>
    <property type="match status" value="1"/>
</dbReference>
<dbReference type="PRINTS" id="PR01069">
    <property type="entry name" value="ACCCTRFRASEA"/>
</dbReference>
<dbReference type="SUPFAM" id="SSF52096">
    <property type="entry name" value="ClpP/crotonase"/>
    <property type="match status" value="1"/>
</dbReference>
<dbReference type="PROSITE" id="PS50989">
    <property type="entry name" value="COA_CT_CTER"/>
    <property type="match status" value="1"/>
</dbReference>
<protein>
    <recommendedName>
        <fullName evidence="1">Acetyl-coenzyme A carboxylase carboxyl transferase subunit alpha</fullName>
        <shortName evidence="1">ACCase subunit alpha</shortName>
        <shortName evidence="1">Acetyl-CoA carboxylase carboxyltransferase subunit alpha</shortName>
        <ecNumber evidence="1">2.1.3.15</ecNumber>
    </recommendedName>
</protein>
<comment type="function">
    <text evidence="1">Component of the acetyl coenzyme A carboxylase (ACC) complex. First, biotin carboxylase catalyzes the carboxylation of biotin on its carrier protein (BCCP) and then the CO(2) group is transferred by the carboxyltransferase to acetyl-CoA to form malonyl-CoA.</text>
</comment>
<comment type="catalytic activity">
    <reaction evidence="1">
        <text>N(6)-carboxybiotinyl-L-lysyl-[protein] + acetyl-CoA = N(6)-biotinyl-L-lysyl-[protein] + malonyl-CoA</text>
        <dbReference type="Rhea" id="RHEA:54728"/>
        <dbReference type="Rhea" id="RHEA-COMP:10505"/>
        <dbReference type="Rhea" id="RHEA-COMP:10506"/>
        <dbReference type="ChEBI" id="CHEBI:57288"/>
        <dbReference type="ChEBI" id="CHEBI:57384"/>
        <dbReference type="ChEBI" id="CHEBI:83144"/>
        <dbReference type="ChEBI" id="CHEBI:83145"/>
        <dbReference type="EC" id="2.1.3.15"/>
    </reaction>
</comment>
<comment type="pathway">
    <text evidence="1">Lipid metabolism; malonyl-CoA biosynthesis; malonyl-CoA from acetyl-CoA: step 1/1.</text>
</comment>
<comment type="subunit">
    <text evidence="1">Acetyl-CoA carboxylase is a heterohexamer composed of biotin carboxyl carrier protein (AccB), biotin carboxylase (AccC) and two subunits each of ACCase subunit alpha (AccA) and ACCase subunit beta (AccD).</text>
</comment>
<comment type="subcellular location">
    <subcellularLocation>
        <location evidence="1">Cytoplasm</location>
    </subcellularLocation>
</comment>
<comment type="similarity">
    <text evidence="1">Belongs to the AccA family.</text>
</comment>
<keyword id="KW-0067">ATP-binding</keyword>
<keyword id="KW-0963">Cytoplasm</keyword>
<keyword id="KW-0275">Fatty acid biosynthesis</keyword>
<keyword id="KW-0276">Fatty acid metabolism</keyword>
<keyword id="KW-0444">Lipid biosynthesis</keyword>
<keyword id="KW-0443">Lipid metabolism</keyword>
<keyword id="KW-0547">Nucleotide-binding</keyword>
<keyword id="KW-0808">Transferase</keyword>
<evidence type="ECO:0000255" key="1">
    <source>
        <dbReference type="HAMAP-Rule" id="MF_00823"/>
    </source>
</evidence>
<evidence type="ECO:0000255" key="2">
    <source>
        <dbReference type="PROSITE-ProRule" id="PRU01137"/>
    </source>
</evidence>
<organism>
    <name type="scientific">Ruthia magnifica subsp. Calyptogena magnifica</name>
    <dbReference type="NCBI Taxonomy" id="413404"/>
    <lineage>
        <taxon>Bacteria</taxon>
        <taxon>Pseudomonadati</taxon>
        <taxon>Pseudomonadota</taxon>
        <taxon>Gammaproteobacteria</taxon>
        <taxon>Candidatus Pseudothioglobaceae</taxon>
        <taxon>Candidatus Ruthturnera</taxon>
    </lineage>
</organism>
<gene>
    <name evidence="1" type="primary">accA</name>
    <name type="ordered locus">Rmag_0123</name>
</gene>
<feature type="chain" id="PRO_1000062669" description="Acetyl-coenzyme A carboxylase carboxyl transferase subunit alpha">
    <location>
        <begin position="1"/>
        <end position="316"/>
    </location>
</feature>
<feature type="domain" description="CoA carboxyltransferase C-terminal" evidence="2">
    <location>
        <begin position="24"/>
        <end position="291"/>
    </location>
</feature>
<sequence>MNLDYLDFEQPIVELEEKIQALDNIKDKADIVDEMGALKIKSNALTKKIFSSLSDWQISQLARHPKRLYTLDYISHVFDEFTELHGDRIYGDDHAIIGGIARLDAQPVMFIGQQKGRTTQEKLKYNFGMPRPEGYRKALRLMKLSEKFSMPIITFIDTPGAYPGIGAEERGQSEAIAKNLFEMSTLATPIISVVIGEGGSGGALAIGVADIIMMFKYSIYSVISPEGCASILYKDATKANLAAESLKLTSAHLKENGLIDIIIDEPLGGIHRDPSQAKVLLKEALIQQLNEIKQLPIEQLLQNRQEKLLNFGKFKD</sequence>